<organism>
    <name type="scientific">Shigella flexneri</name>
    <dbReference type="NCBI Taxonomy" id="623"/>
    <lineage>
        <taxon>Bacteria</taxon>
        <taxon>Pseudomonadati</taxon>
        <taxon>Pseudomonadota</taxon>
        <taxon>Gammaproteobacteria</taxon>
        <taxon>Enterobacterales</taxon>
        <taxon>Enterobacteriaceae</taxon>
        <taxon>Shigella</taxon>
    </lineage>
</organism>
<feature type="initiator methionine" description="Removed" evidence="1">
    <location>
        <position position="1"/>
    </location>
</feature>
<feature type="chain" id="PRO_0000187897" description="Thiol peroxidase">
    <location>
        <begin position="2"/>
        <end position="168"/>
    </location>
</feature>
<feature type="domain" description="Thioredoxin" evidence="2">
    <location>
        <begin position="19"/>
        <end position="168"/>
    </location>
</feature>
<feature type="active site" description="Cysteine sulfenic acid (-SOH) intermediate" evidence="2">
    <location>
        <position position="61"/>
    </location>
</feature>
<feature type="disulfide bond" description="Redox-active" evidence="2">
    <location>
        <begin position="61"/>
        <end position="95"/>
    </location>
</feature>
<sequence>MSQTVHFQGNPVTVANSIPQAGSKAQTFTLVAKDLSDVTLGQFAGKRKVLNIFPSIDTGVCAASVRKFNQLATEIDNTVVLCISADLPFAQSRFCGAEGLNNVITLSTFRNAEFLQAYGVAIADGPLKGLAARAVVVIDENDNVIFSQLVDEITTEPDYEAALAVLKA</sequence>
<dbReference type="EC" id="1.11.1.24" evidence="2"/>
<dbReference type="EMBL" id="AE005674">
    <property type="protein sequence ID" value="AAN42936.1"/>
    <property type="molecule type" value="Genomic_DNA"/>
</dbReference>
<dbReference type="EMBL" id="AE014073">
    <property type="protein sequence ID" value="AAP16820.1"/>
    <property type="molecule type" value="Genomic_DNA"/>
</dbReference>
<dbReference type="RefSeq" id="NP_707229.1">
    <property type="nucleotide sequence ID" value="NC_004337.2"/>
</dbReference>
<dbReference type="RefSeq" id="WP_000084387.1">
    <property type="nucleotide sequence ID" value="NZ_WPGW01000064.1"/>
</dbReference>
<dbReference type="SMR" id="P0A865"/>
<dbReference type="STRING" id="198214.SF1330"/>
<dbReference type="PaxDb" id="198214-SF1330"/>
<dbReference type="GeneID" id="1024307"/>
<dbReference type="GeneID" id="75203439"/>
<dbReference type="KEGG" id="sfl:SF1330"/>
<dbReference type="KEGG" id="sfx:S1413"/>
<dbReference type="PATRIC" id="fig|198214.7.peg.1564"/>
<dbReference type="HOGENOM" id="CLU_042529_12_2_6"/>
<dbReference type="Proteomes" id="UP000001006">
    <property type="component" value="Chromosome"/>
</dbReference>
<dbReference type="Proteomes" id="UP000002673">
    <property type="component" value="Chromosome"/>
</dbReference>
<dbReference type="GO" id="GO:0008379">
    <property type="term" value="F:thioredoxin peroxidase activity"/>
    <property type="evidence" value="ECO:0007669"/>
    <property type="project" value="UniProtKB-UniRule"/>
</dbReference>
<dbReference type="CDD" id="cd03014">
    <property type="entry name" value="PRX_Atyp2cys"/>
    <property type="match status" value="1"/>
</dbReference>
<dbReference type="FunFam" id="3.40.30.10:FF:000056">
    <property type="entry name" value="Thiol peroxidase"/>
    <property type="match status" value="1"/>
</dbReference>
<dbReference type="Gene3D" id="3.40.30.10">
    <property type="entry name" value="Glutaredoxin"/>
    <property type="match status" value="1"/>
</dbReference>
<dbReference type="HAMAP" id="MF_00269">
    <property type="entry name" value="Tpx"/>
    <property type="match status" value="1"/>
</dbReference>
<dbReference type="InterPro" id="IPR013740">
    <property type="entry name" value="Redoxin"/>
</dbReference>
<dbReference type="InterPro" id="IPR036249">
    <property type="entry name" value="Thioredoxin-like_sf"/>
</dbReference>
<dbReference type="InterPro" id="IPR013766">
    <property type="entry name" value="Thioredoxin_domain"/>
</dbReference>
<dbReference type="InterPro" id="IPR002065">
    <property type="entry name" value="TPX"/>
</dbReference>
<dbReference type="InterPro" id="IPR018219">
    <property type="entry name" value="Tpx_CS"/>
</dbReference>
<dbReference type="InterPro" id="IPR050455">
    <property type="entry name" value="Tpx_Peroxidase_subfamily"/>
</dbReference>
<dbReference type="NCBIfam" id="NF001808">
    <property type="entry name" value="PRK00522.1"/>
    <property type="match status" value="1"/>
</dbReference>
<dbReference type="PANTHER" id="PTHR43110">
    <property type="entry name" value="THIOL PEROXIDASE"/>
    <property type="match status" value="1"/>
</dbReference>
<dbReference type="PANTHER" id="PTHR43110:SF1">
    <property type="entry name" value="THIOL PEROXIDASE"/>
    <property type="match status" value="1"/>
</dbReference>
<dbReference type="Pfam" id="PF08534">
    <property type="entry name" value="Redoxin"/>
    <property type="match status" value="1"/>
</dbReference>
<dbReference type="SUPFAM" id="SSF52833">
    <property type="entry name" value="Thioredoxin-like"/>
    <property type="match status" value="1"/>
</dbReference>
<dbReference type="PROSITE" id="PS51352">
    <property type="entry name" value="THIOREDOXIN_2"/>
    <property type="match status" value="1"/>
</dbReference>
<dbReference type="PROSITE" id="PS01265">
    <property type="entry name" value="TPX"/>
    <property type="match status" value="1"/>
</dbReference>
<keyword id="KW-0049">Antioxidant</keyword>
<keyword id="KW-1015">Disulfide bond</keyword>
<keyword id="KW-0560">Oxidoreductase</keyword>
<keyword id="KW-0575">Peroxidase</keyword>
<keyword id="KW-0676">Redox-active center</keyword>
<keyword id="KW-1185">Reference proteome</keyword>
<accession>P0A865</accession>
<accession>P37901</accession>
<accession>P57669</accession>
<accession>P76047</accession>
<accession>P77786</accession>
<name>TPX_SHIFL</name>
<proteinExistence type="inferred from homology"/>
<reference key="1">
    <citation type="journal article" date="2002" name="Nucleic Acids Res.">
        <title>Genome sequence of Shigella flexneri 2a: insights into pathogenicity through comparison with genomes of Escherichia coli K12 and O157.</title>
        <authorList>
            <person name="Jin Q."/>
            <person name="Yuan Z."/>
            <person name="Xu J."/>
            <person name="Wang Y."/>
            <person name="Shen Y."/>
            <person name="Lu W."/>
            <person name="Wang J."/>
            <person name="Liu H."/>
            <person name="Yang J."/>
            <person name="Yang F."/>
            <person name="Zhang X."/>
            <person name="Zhang J."/>
            <person name="Yang G."/>
            <person name="Wu H."/>
            <person name="Qu D."/>
            <person name="Dong J."/>
            <person name="Sun L."/>
            <person name="Xue Y."/>
            <person name="Zhao A."/>
            <person name="Gao Y."/>
            <person name="Zhu J."/>
            <person name="Kan B."/>
            <person name="Ding K."/>
            <person name="Chen S."/>
            <person name="Cheng H."/>
            <person name="Yao Z."/>
            <person name="He B."/>
            <person name="Chen R."/>
            <person name="Ma D."/>
            <person name="Qiang B."/>
            <person name="Wen Y."/>
            <person name="Hou Y."/>
            <person name="Yu J."/>
        </authorList>
    </citation>
    <scope>NUCLEOTIDE SEQUENCE [LARGE SCALE GENOMIC DNA]</scope>
    <source>
        <strain>301 / Serotype 2a</strain>
    </source>
</reference>
<reference key="2">
    <citation type="journal article" date="2003" name="Infect. Immun.">
        <title>Complete genome sequence and comparative genomics of Shigella flexneri serotype 2a strain 2457T.</title>
        <authorList>
            <person name="Wei J."/>
            <person name="Goldberg M.B."/>
            <person name="Burland V."/>
            <person name="Venkatesan M.M."/>
            <person name="Deng W."/>
            <person name="Fournier G."/>
            <person name="Mayhew G.F."/>
            <person name="Plunkett G. III"/>
            <person name="Rose D.J."/>
            <person name="Darling A."/>
            <person name="Mau B."/>
            <person name="Perna N.T."/>
            <person name="Payne S.M."/>
            <person name="Runyen-Janecky L.J."/>
            <person name="Zhou S."/>
            <person name="Schwartz D.C."/>
            <person name="Blattner F.R."/>
        </authorList>
    </citation>
    <scope>NUCLEOTIDE SEQUENCE [LARGE SCALE GENOMIC DNA]</scope>
    <source>
        <strain>ATCC 700930 / 2457T / Serotype 2a</strain>
    </source>
</reference>
<comment type="function">
    <text evidence="2">Thiol-specific peroxidase that catalyzes the reduction of hydrogen peroxide and organic hydroperoxides to water and alcohols, respectively. Plays a role in cell protection against oxidative stress by detoxifying peroxides.</text>
</comment>
<comment type="catalytic activity">
    <reaction evidence="2">
        <text>a hydroperoxide + [thioredoxin]-dithiol = an alcohol + [thioredoxin]-disulfide + H2O</text>
        <dbReference type="Rhea" id="RHEA:62620"/>
        <dbReference type="Rhea" id="RHEA-COMP:10698"/>
        <dbReference type="Rhea" id="RHEA-COMP:10700"/>
        <dbReference type="ChEBI" id="CHEBI:15377"/>
        <dbReference type="ChEBI" id="CHEBI:29950"/>
        <dbReference type="ChEBI" id="CHEBI:30879"/>
        <dbReference type="ChEBI" id="CHEBI:35924"/>
        <dbReference type="ChEBI" id="CHEBI:50058"/>
        <dbReference type="EC" id="1.11.1.24"/>
    </reaction>
</comment>
<comment type="subunit">
    <text evidence="2">Homodimer.</text>
</comment>
<comment type="miscellaneous">
    <text evidence="2">The active site is a conserved redox-active cysteine residue, the peroxidatic cysteine (C(P)), which makes the nucleophilic attack on the peroxide substrate. The peroxide oxidizes the C(P)-SH to cysteine sulfenic acid (C(P)-SOH), which then reacts with another cysteine residue, the resolving cysteine (C(R)), to form a disulfide bridge. The disulfide is subsequently reduced by an appropriate electron donor to complete the catalytic cycle. In this atypical 2-Cys peroxiredoxin, C(R) is present in the same subunit to form an intramolecular disulfide. The disulfide is subsequently reduced by thioredoxin.</text>
</comment>
<comment type="similarity">
    <text evidence="2">Belongs to the peroxiredoxin family. Tpx subfamily.</text>
</comment>
<evidence type="ECO:0000250" key="1"/>
<evidence type="ECO:0000255" key="2">
    <source>
        <dbReference type="HAMAP-Rule" id="MF_00269"/>
    </source>
</evidence>
<gene>
    <name evidence="2" type="primary">tpx</name>
    <name type="ordered locus">SF1330</name>
    <name type="ordered locus">S1413</name>
</gene>
<protein>
    <recommendedName>
        <fullName evidence="2">Thiol peroxidase</fullName>
        <shortName evidence="2">Tpx</shortName>
        <ecNumber evidence="2">1.11.1.24</ecNumber>
    </recommendedName>
    <alternativeName>
        <fullName evidence="2">Peroxiredoxin tpx</fullName>
        <shortName evidence="2">Prx</shortName>
    </alternativeName>
    <alternativeName>
        <fullName evidence="2">Thioredoxin peroxidase</fullName>
    </alternativeName>
    <alternativeName>
        <fullName evidence="2">Thioredoxin-dependent peroxiredoxin</fullName>
    </alternativeName>
</protein>